<accession>P0CL82</accession>
<accession>Q66I50</accession>
<reference key="1">
    <citation type="journal article" date="2005" name="Nature">
        <title>The DNA sequence of the human X chromosome.</title>
        <authorList>
            <person name="Ross M.T."/>
            <person name="Grafham D.V."/>
            <person name="Coffey A.J."/>
            <person name="Scherer S."/>
            <person name="McLay K."/>
            <person name="Muzny D."/>
            <person name="Platzer M."/>
            <person name="Howell G.R."/>
            <person name="Burrows C."/>
            <person name="Bird C.P."/>
            <person name="Frankish A."/>
            <person name="Lovell F.L."/>
            <person name="Howe K.L."/>
            <person name="Ashurst J.L."/>
            <person name="Fulton R.S."/>
            <person name="Sudbrak R."/>
            <person name="Wen G."/>
            <person name="Jones M.C."/>
            <person name="Hurles M.E."/>
            <person name="Andrews T.D."/>
            <person name="Scott C.E."/>
            <person name="Searle S."/>
            <person name="Ramser J."/>
            <person name="Whittaker A."/>
            <person name="Deadman R."/>
            <person name="Carter N.P."/>
            <person name="Hunt S.E."/>
            <person name="Chen R."/>
            <person name="Cree A."/>
            <person name="Gunaratne P."/>
            <person name="Havlak P."/>
            <person name="Hodgson A."/>
            <person name="Metzker M.L."/>
            <person name="Richards S."/>
            <person name="Scott G."/>
            <person name="Steffen D."/>
            <person name="Sodergren E."/>
            <person name="Wheeler D.A."/>
            <person name="Worley K.C."/>
            <person name="Ainscough R."/>
            <person name="Ambrose K.D."/>
            <person name="Ansari-Lari M.A."/>
            <person name="Aradhya S."/>
            <person name="Ashwell R.I."/>
            <person name="Babbage A.K."/>
            <person name="Bagguley C.L."/>
            <person name="Ballabio A."/>
            <person name="Banerjee R."/>
            <person name="Barker G.E."/>
            <person name="Barlow K.F."/>
            <person name="Barrett I.P."/>
            <person name="Bates K.N."/>
            <person name="Beare D.M."/>
            <person name="Beasley H."/>
            <person name="Beasley O."/>
            <person name="Beck A."/>
            <person name="Bethel G."/>
            <person name="Blechschmidt K."/>
            <person name="Brady N."/>
            <person name="Bray-Allen S."/>
            <person name="Bridgeman A.M."/>
            <person name="Brown A.J."/>
            <person name="Brown M.J."/>
            <person name="Bonnin D."/>
            <person name="Bruford E.A."/>
            <person name="Buhay C."/>
            <person name="Burch P."/>
            <person name="Burford D."/>
            <person name="Burgess J."/>
            <person name="Burrill W."/>
            <person name="Burton J."/>
            <person name="Bye J.M."/>
            <person name="Carder C."/>
            <person name="Carrel L."/>
            <person name="Chako J."/>
            <person name="Chapman J.C."/>
            <person name="Chavez D."/>
            <person name="Chen E."/>
            <person name="Chen G."/>
            <person name="Chen Y."/>
            <person name="Chen Z."/>
            <person name="Chinault C."/>
            <person name="Ciccodicola A."/>
            <person name="Clark S.Y."/>
            <person name="Clarke G."/>
            <person name="Clee C.M."/>
            <person name="Clegg S."/>
            <person name="Clerc-Blankenburg K."/>
            <person name="Clifford K."/>
            <person name="Cobley V."/>
            <person name="Cole C.G."/>
            <person name="Conquer J.S."/>
            <person name="Corby N."/>
            <person name="Connor R.E."/>
            <person name="David R."/>
            <person name="Davies J."/>
            <person name="Davis C."/>
            <person name="Davis J."/>
            <person name="Delgado O."/>
            <person name="Deshazo D."/>
            <person name="Dhami P."/>
            <person name="Ding Y."/>
            <person name="Dinh H."/>
            <person name="Dodsworth S."/>
            <person name="Draper H."/>
            <person name="Dugan-Rocha S."/>
            <person name="Dunham A."/>
            <person name="Dunn M."/>
            <person name="Durbin K.J."/>
            <person name="Dutta I."/>
            <person name="Eades T."/>
            <person name="Ellwood M."/>
            <person name="Emery-Cohen A."/>
            <person name="Errington H."/>
            <person name="Evans K.L."/>
            <person name="Faulkner L."/>
            <person name="Francis F."/>
            <person name="Frankland J."/>
            <person name="Fraser A.E."/>
            <person name="Galgoczy P."/>
            <person name="Gilbert J."/>
            <person name="Gill R."/>
            <person name="Gloeckner G."/>
            <person name="Gregory S.G."/>
            <person name="Gribble S."/>
            <person name="Griffiths C."/>
            <person name="Grocock R."/>
            <person name="Gu Y."/>
            <person name="Gwilliam R."/>
            <person name="Hamilton C."/>
            <person name="Hart E.A."/>
            <person name="Hawes A."/>
            <person name="Heath P.D."/>
            <person name="Heitmann K."/>
            <person name="Hennig S."/>
            <person name="Hernandez J."/>
            <person name="Hinzmann B."/>
            <person name="Ho S."/>
            <person name="Hoffs M."/>
            <person name="Howden P.J."/>
            <person name="Huckle E.J."/>
            <person name="Hume J."/>
            <person name="Hunt P.J."/>
            <person name="Hunt A.R."/>
            <person name="Isherwood J."/>
            <person name="Jacob L."/>
            <person name="Johnson D."/>
            <person name="Jones S."/>
            <person name="de Jong P.J."/>
            <person name="Joseph S.S."/>
            <person name="Keenan S."/>
            <person name="Kelly S."/>
            <person name="Kershaw J.K."/>
            <person name="Khan Z."/>
            <person name="Kioschis P."/>
            <person name="Klages S."/>
            <person name="Knights A.J."/>
            <person name="Kosiura A."/>
            <person name="Kovar-Smith C."/>
            <person name="Laird G.K."/>
            <person name="Langford C."/>
            <person name="Lawlor S."/>
            <person name="Leversha M."/>
            <person name="Lewis L."/>
            <person name="Liu W."/>
            <person name="Lloyd C."/>
            <person name="Lloyd D.M."/>
            <person name="Loulseged H."/>
            <person name="Loveland J.E."/>
            <person name="Lovell J.D."/>
            <person name="Lozado R."/>
            <person name="Lu J."/>
            <person name="Lyne R."/>
            <person name="Ma J."/>
            <person name="Maheshwari M."/>
            <person name="Matthews L.H."/>
            <person name="McDowall J."/>
            <person name="McLaren S."/>
            <person name="McMurray A."/>
            <person name="Meidl P."/>
            <person name="Meitinger T."/>
            <person name="Milne S."/>
            <person name="Miner G."/>
            <person name="Mistry S.L."/>
            <person name="Morgan M."/>
            <person name="Morris S."/>
            <person name="Mueller I."/>
            <person name="Mullikin J.C."/>
            <person name="Nguyen N."/>
            <person name="Nordsiek G."/>
            <person name="Nyakatura G."/>
            <person name="O'dell C.N."/>
            <person name="Okwuonu G."/>
            <person name="Palmer S."/>
            <person name="Pandian R."/>
            <person name="Parker D."/>
            <person name="Parrish J."/>
            <person name="Pasternak S."/>
            <person name="Patel D."/>
            <person name="Pearce A.V."/>
            <person name="Pearson D.M."/>
            <person name="Pelan S.E."/>
            <person name="Perez L."/>
            <person name="Porter K.M."/>
            <person name="Ramsey Y."/>
            <person name="Reichwald K."/>
            <person name="Rhodes S."/>
            <person name="Ridler K.A."/>
            <person name="Schlessinger D."/>
            <person name="Schueler M.G."/>
            <person name="Sehra H.K."/>
            <person name="Shaw-Smith C."/>
            <person name="Shen H."/>
            <person name="Sheridan E.M."/>
            <person name="Shownkeen R."/>
            <person name="Skuce C.D."/>
            <person name="Smith M.L."/>
            <person name="Sotheran E.C."/>
            <person name="Steingruber H.E."/>
            <person name="Steward C.A."/>
            <person name="Storey R."/>
            <person name="Swann R.M."/>
            <person name="Swarbreck D."/>
            <person name="Tabor P.E."/>
            <person name="Taudien S."/>
            <person name="Taylor T."/>
            <person name="Teague B."/>
            <person name="Thomas K."/>
            <person name="Thorpe A."/>
            <person name="Timms K."/>
            <person name="Tracey A."/>
            <person name="Trevanion S."/>
            <person name="Tromans A.C."/>
            <person name="d'Urso M."/>
            <person name="Verduzco D."/>
            <person name="Villasana D."/>
            <person name="Waldron L."/>
            <person name="Wall M."/>
            <person name="Wang Q."/>
            <person name="Warren J."/>
            <person name="Warry G.L."/>
            <person name="Wei X."/>
            <person name="West A."/>
            <person name="Whitehead S.L."/>
            <person name="Whiteley M.N."/>
            <person name="Wilkinson J.E."/>
            <person name="Willey D.L."/>
            <person name="Williams G."/>
            <person name="Williams L."/>
            <person name="Williamson A."/>
            <person name="Williamson H."/>
            <person name="Wilming L."/>
            <person name="Woodmansey R.L."/>
            <person name="Wray P.W."/>
            <person name="Yen J."/>
            <person name="Zhang J."/>
            <person name="Zhou J."/>
            <person name="Zoghbi H."/>
            <person name="Zorilla S."/>
            <person name="Buck D."/>
            <person name="Reinhardt R."/>
            <person name="Poustka A."/>
            <person name="Rosenthal A."/>
            <person name="Lehrach H."/>
            <person name="Meindl A."/>
            <person name="Minx P.J."/>
            <person name="Hillier L.W."/>
            <person name="Willard H.F."/>
            <person name="Wilson R.K."/>
            <person name="Waterston R.H."/>
            <person name="Rice C.M."/>
            <person name="Vaudin M."/>
            <person name="Coulson A."/>
            <person name="Nelson D.L."/>
            <person name="Weinstock G."/>
            <person name="Sulston J.E."/>
            <person name="Durbin R.M."/>
            <person name="Hubbard T."/>
            <person name="Gibbs R.A."/>
            <person name="Beck S."/>
            <person name="Rogers J."/>
            <person name="Bentley D.R."/>
        </authorList>
    </citation>
    <scope>NUCLEOTIDE SEQUENCE [LARGE SCALE GENOMIC DNA]</scope>
</reference>
<reference key="2">
    <citation type="journal article" date="2008" name="Tissue Antigens">
        <title>An overview of the GAGE cancer/testis antigen family with the inclusion of newly identified members.</title>
        <authorList>
            <person name="Gjerstorff M.F."/>
            <person name="Ditzel H.J."/>
        </authorList>
    </citation>
    <scope>GAGE FAMILY</scope>
</reference>
<reference key="3">
    <citation type="journal article" date="2010" name="Protein Expr. Purif.">
        <title>Expression, purification and characterization of the cancer-germline antigen GAGE12I: a candidate for cancer immunotherapy.</title>
        <authorList>
            <person name="Gjerstorff M.F."/>
            <person name="Besir H."/>
            <person name="Larsen M.R."/>
            <person name="Ditzel H.J."/>
        </authorList>
    </citation>
    <scope>SUBUNIT</scope>
</reference>
<dbReference type="EMBL" id="BX649339">
    <property type="status" value="NOT_ANNOTATED_CDS"/>
    <property type="molecule type" value="Genomic_DNA"/>
</dbReference>
<dbReference type="RefSeq" id="NP_001468.1">
    <property type="nucleotide sequence ID" value="NM_001477.1"/>
</dbReference>
<dbReference type="BioGRID" id="108852">
    <property type="interactions" value="1"/>
</dbReference>
<dbReference type="BioGRID" id="117808">
    <property type="interactions" value="3"/>
</dbReference>
<dbReference type="BioGRID" id="570130">
    <property type="interactions" value="6"/>
</dbReference>
<dbReference type="BioGRID" id="755635">
    <property type="interactions" value="1"/>
</dbReference>
<dbReference type="IntAct" id="P0CL82">
    <property type="interactions" value="2"/>
</dbReference>
<dbReference type="iPTMnet" id="P0CL82"/>
<dbReference type="PhosphoSitePlus" id="P0CL82"/>
<dbReference type="BioMuta" id="HGNC:4105"/>
<dbReference type="DMDM" id="332313381"/>
<dbReference type="jPOST" id="P0CL82"/>
<dbReference type="MassIVE" id="P0CL82"/>
<dbReference type="Pumba" id="P0CL82"/>
<dbReference type="Antibodypedia" id="64945">
    <property type="antibodies" value="132 antibodies from 20 providers"/>
</dbReference>
<dbReference type="Antibodypedia" id="70742">
    <property type="antibodies" value="15 antibodies from 7 providers"/>
</dbReference>
<dbReference type="DNASU" id="100008586"/>
<dbReference type="DNASU" id="2579"/>
<dbReference type="DNASU" id="26748"/>
<dbReference type="DNASU" id="645073"/>
<dbReference type="GeneID" id="26748"/>
<dbReference type="KEGG" id="hsa:100008586"/>
<dbReference type="KEGG" id="hsa:2579"/>
<dbReference type="KEGG" id="hsa:26748"/>
<dbReference type="KEGG" id="hsa:645073"/>
<dbReference type="UCSC" id="uc004dof.5">
    <property type="organism name" value="human"/>
</dbReference>
<dbReference type="AGR" id="HGNC:31906"/>
<dbReference type="AGR" id="HGNC:31907"/>
<dbReference type="AGR" id="HGNC:4104"/>
<dbReference type="AGR" id="HGNC:4105"/>
<dbReference type="CTD" id="100008586"/>
<dbReference type="CTD" id="2579"/>
<dbReference type="CTD" id="26748"/>
<dbReference type="CTD" id="645073"/>
<dbReference type="DisGeNET" id="100008586"/>
<dbReference type="DisGeNET" id="2579"/>
<dbReference type="DisGeNET" id="26748"/>
<dbReference type="DisGeNET" id="645073"/>
<dbReference type="GeneCards" id="GAGE12I"/>
<dbReference type="HGNC" id="HGNC:4105">
    <property type="gene designation" value="GAGE12I"/>
</dbReference>
<dbReference type="HPA" id="ENSG00000215269">
    <property type="expression patterns" value="Tissue enriched (testis)"/>
</dbReference>
<dbReference type="HPA" id="ENSG00000236362">
    <property type="expression patterns" value="Tissue enriched (testis)"/>
</dbReference>
<dbReference type="neXtProt" id="NX_P0CL82"/>
<dbReference type="VEuPathDB" id="HostDB:ENSG00000215269"/>
<dbReference type="VEuPathDB" id="HostDB:ENSG00000236362"/>
<dbReference type="GeneTree" id="ENSGT00940000153097"/>
<dbReference type="HOGENOM" id="CLU_150116_0_0_1"/>
<dbReference type="InParanoid" id="P0CL82"/>
<dbReference type="OrthoDB" id="9539459at2759"/>
<dbReference type="PAN-GO" id="P0CL82">
    <property type="GO annotations" value="0 GO annotations based on evolutionary models"/>
</dbReference>
<dbReference type="PhylomeDB" id="P0CL82"/>
<dbReference type="TreeFam" id="TF340669"/>
<dbReference type="PathwayCommons" id="P0CL82"/>
<dbReference type="SignaLink" id="P0CL82"/>
<dbReference type="BioGRID-ORCS" id="100008586">
    <property type="hits" value="3 hits in 66 CRISPR screens"/>
</dbReference>
<dbReference type="BioGRID-ORCS" id="2579">
    <property type="hits" value="3 hits in 26 CRISPR screens"/>
</dbReference>
<dbReference type="BioGRID-ORCS" id="26748">
    <property type="hits" value="4 hits in 125 CRISPR screens"/>
</dbReference>
<dbReference type="BioGRID-ORCS" id="645073">
    <property type="hits" value="4 hits in 38 CRISPR screens"/>
</dbReference>
<dbReference type="Pharos" id="P0CL82">
    <property type="development level" value="Tbio"/>
</dbReference>
<dbReference type="PRO" id="PR:P0CL82"/>
<dbReference type="Proteomes" id="UP000005640">
    <property type="component" value="Unplaced"/>
</dbReference>
<dbReference type="RNAct" id="P0CL82">
    <property type="molecule type" value="protein"/>
</dbReference>
<dbReference type="ExpressionAtlas" id="P0CL82">
    <property type="expression patterns" value="baseline"/>
</dbReference>
<dbReference type="InterPro" id="IPR031320">
    <property type="entry name" value="GAGE"/>
</dbReference>
<dbReference type="InterPro" id="IPR008625">
    <property type="entry name" value="GAGE_fam"/>
</dbReference>
<dbReference type="PANTHER" id="PTHR14047:SF30">
    <property type="entry name" value="G ANTIGEN 1-RELATED"/>
    <property type="match status" value="1"/>
</dbReference>
<dbReference type="PANTHER" id="PTHR14047">
    <property type="entry name" value="P ANTIGEN FAMILY MEMBER 5-RELATED"/>
    <property type="match status" value="1"/>
</dbReference>
<dbReference type="Pfam" id="PF05831">
    <property type="entry name" value="GAGE"/>
    <property type="match status" value="1"/>
</dbReference>
<dbReference type="SMART" id="SM01379">
    <property type="entry name" value="GAGE"/>
    <property type="match status" value="1"/>
</dbReference>
<protein>
    <recommendedName>
        <fullName>G antigen 12I</fullName>
        <shortName>GAGE-12I</shortName>
    </recommendedName>
</protein>
<proteinExistence type="evidence at protein level"/>
<sequence length="117" mass="12978">MSWRGRSTYYWPRPRRYVQPPEMIGPMRPEQFSDEVEPATPEEGEPATQRQDPAAAQEGEDEGASAGQGPKPEAHSQEQGHPQTGCECEDGPDGQEMDPPNPEEVKTPEEGEKQSQC</sequence>
<evidence type="ECO:0000256" key="1">
    <source>
        <dbReference type="SAM" id="MobiDB-lite"/>
    </source>
</evidence>
<evidence type="ECO:0000269" key="2">
    <source>
    </source>
</evidence>
<evidence type="ECO:0000305" key="3"/>
<gene>
    <name type="primary">GAGE12I</name>
</gene>
<comment type="subunit">
    <text evidence="2">Forms tetramers.</text>
</comment>
<comment type="interaction">
    <interactant intactId="EBI-10196803">
        <id>P0CL82</id>
    </interactant>
    <interactant intactId="EBI-10172181">
        <id>Q53SE7</id>
        <label>FLJ13057</label>
    </interactant>
    <organismsDiffer>false</organismsDiffer>
    <experiments>3</experiments>
</comment>
<comment type="interaction">
    <interactant intactId="EBI-10196803">
        <id>P0CL82</id>
    </interactant>
    <interactant intactId="EBI-745707">
        <id>Q8NEA9</id>
        <label>GMCL2</label>
    </interactant>
    <organismsDiffer>false</organismsDiffer>
    <experiments>3</experiments>
</comment>
<comment type="miscellaneous">
    <text>This gene belongs to a multigene family expressed in a large variety of tumors whereas in normal tissues, expression is restricted to germ cells. These genes organized in clustered repeats, have a high degree of predicted sequence identity, but differ by scattered single nucleotide substitution. Their sequences contain either the antigenic peptide YYWPRPRRY or YRPRPRRY which is recognized by cytotoxic T-cells.</text>
</comment>
<comment type="similarity">
    <text evidence="3">Belongs to the GAGE family.</text>
</comment>
<comment type="caution">
    <text evidence="3">The first GAGE nomenclature was based on identified mRNA sequences, but the high identity of the GAGE members made impossible to separate products of paralogous genes from polymorph products. PubMed:18179644 presented a new GAGE gene nomenclature based on the identified genes and their products.</text>
</comment>
<name>GG12I_HUMAN</name>
<feature type="chain" id="PRO_0000407493" description="G antigen 12I">
    <location>
        <begin position="1"/>
        <end position="117"/>
    </location>
</feature>
<feature type="region of interest" description="Disordered" evidence="1">
    <location>
        <begin position="1"/>
        <end position="117"/>
    </location>
</feature>
<feature type="compositionally biased region" description="Acidic residues" evidence="1">
    <location>
        <begin position="32"/>
        <end position="45"/>
    </location>
</feature>
<feature type="compositionally biased region" description="Acidic residues" evidence="1">
    <location>
        <begin position="87"/>
        <end position="96"/>
    </location>
</feature>
<feature type="compositionally biased region" description="Basic and acidic residues" evidence="1">
    <location>
        <begin position="103"/>
        <end position="117"/>
    </location>
</feature>
<organism>
    <name type="scientific">Homo sapiens</name>
    <name type="common">Human</name>
    <dbReference type="NCBI Taxonomy" id="9606"/>
    <lineage>
        <taxon>Eukaryota</taxon>
        <taxon>Metazoa</taxon>
        <taxon>Chordata</taxon>
        <taxon>Craniata</taxon>
        <taxon>Vertebrata</taxon>
        <taxon>Euteleostomi</taxon>
        <taxon>Mammalia</taxon>
        <taxon>Eutheria</taxon>
        <taxon>Euarchontoglires</taxon>
        <taxon>Primates</taxon>
        <taxon>Haplorrhini</taxon>
        <taxon>Catarrhini</taxon>
        <taxon>Hominidae</taxon>
        <taxon>Homo</taxon>
    </lineage>
</organism>
<keyword id="KW-1185">Reference proteome</keyword>